<reference key="1">
    <citation type="journal article" date="2001" name="Science">
        <title>Comparative genomics of Listeria species.</title>
        <authorList>
            <person name="Glaser P."/>
            <person name="Frangeul L."/>
            <person name="Buchrieser C."/>
            <person name="Rusniok C."/>
            <person name="Amend A."/>
            <person name="Baquero F."/>
            <person name="Berche P."/>
            <person name="Bloecker H."/>
            <person name="Brandt P."/>
            <person name="Chakraborty T."/>
            <person name="Charbit A."/>
            <person name="Chetouani F."/>
            <person name="Couve E."/>
            <person name="de Daruvar A."/>
            <person name="Dehoux P."/>
            <person name="Domann E."/>
            <person name="Dominguez-Bernal G."/>
            <person name="Duchaud E."/>
            <person name="Durant L."/>
            <person name="Dussurget O."/>
            <person name="Entian K.-D."/>
            <person name="Fsihi H."/>
            <person name="Garcia-del Portillo F."/>
            <person name="Garrido P."/>
            <person name="Gautier L."/>
            <person name="Goebel W."/>
            <person name="Gomez-Lopez N."/>
            <person name="Hain T."/>
            <person name="Hauf J."/>
            <person name="Jackson D."/>
            <person name="Jones L.-M."/>
            <person name="Kaerst U."/>
            <person name="Kreft J."/>
            <person name="Kuhn M."/>
            <person name="Kunst F."/>
            <person name="Kurapkat G."/>
            <person name="Madueno E."/>
            <person name="Maitournam A."/>
            <person name="Mata Vicente J."/>
            <person name="Ng E."/>
            <person name="Nedjari H."/>
            <person name="Nordsiek G."/>
            <person name="Novella S."/>
            <person name="de Pablos B."/>
            <person name="Perez-Diaz J.-C."/>
            <person name="Purcell R."/>
            <person name="Remmel B."/>
            <person name="Rose M."/>
            <person name="Schlueter T."/>
            <person name="Simoes N."/>
            <person name="Tierrez A."/>
            <person name="Vazquez-Boland J.-A."/>
            <person name="Voss H."/>
            <person name="Wehland J."/>
            <person name="Cossart P."/>
        </authorList>
    </citation>
    <scope>NUCLEOTIDE SEQUENCE [LARGE SCALE GENOMIC DNA]</scope>
    <source>
        <strain>ATCC BAA-679 / EGD-e</strain>
    </source>
</reference>
<name>ATPE_LISMO</name>
<accession>Q8Y4C2</accession>
<organism>
    <name type="scientific">Listeria monocytogenes serovar 1/2a (strain ATCC BAA-679 / EGD-e)</name>
    <dbReference type="NCBI Taxonomy" id="169963"/>
    <lineage>
        <taxon>Bacteria</taxon>
        <taxon>Bacillati</taxon>
        <taxon>Bacillota</taxon>
        <taxon>Bacilli</taxon>
        <taxon>Bacillales</taxon>
        <taxon>Listeriaceae</taxon>
        <taxon>Listeria</taxon>
    </lineage>
</organism>
<sequence>MGSLNVSIVTPDGPVYEGVAQMVIARTKAGELGILPGHVPLVAPLKIDIVRLKVESGEEWVAVNGGFMEVNGEEVNILADTAEREQDIDIDRAEKAKQRAEEELSRAKEQKVDEVMAQLALQRAINRIHAKEHN</sequence>
<proteinExistence type="inferred from homology"/>
<protein>
    <recommendedName>
        <fullName evidence="1">ATP synthase epsilon chain</fullName>
    </recommendedName>
    <alternativeName>
        <fullName evidence="1">ATP synthase F1 sector epsilon subunit</fullName>
    </alternativeName>
    <alternativeName>
        <fullName evidence="1">F-ATPase epsilon subunit</fullName>
    </alternativeName>
</protein>
<evidence type="ECO:0000255" key="1">
    <source>
        <dbReference type="HAMAP-Rule" id="MF_00530"/>
    </source>
</evidence>
<gene>
    <name evidence="1" type="primary">atpC</name>
    <name type="ordered locus">lmo2528</name>
</gene>
<comment type="function">
    <text evidence="1">Produces ATP from ADP in the presence of a proton gradient across the membrane.</text>
</comment>
<comment type="subunit">
    <text>F-type ATPases have 2 components, CF(1) - the catalytic core - and CF(0) - the membrane proton channel. CF(1) has five subunits: alpha(3), beta(3), gamma(1), delta(1), epsilon(1). CF(0) has three main subunits: a, b and c.</text>
</comment>
<comment type="subcellular location">
    <subcellularLocation>
        <location evidence="1">Cell membrane</location>
        <topology evidence="1">Peripheral membrane protein</topology>
    </subcellularLocation>
</comment>
<comment type="similarity">
    <text evidence="1">Belongs to the ATPase epsilon chain family.</text>
</comment>
<keyword id="KW-0066">ATP synthesis</keyword>
<keyword id="KW-1003">Cell membrane</keyword>
<keyword id="KW-0139">CF(1)</keyword>
<keyword id="KW-0375">Hydrogen ion transport</keyword>
<keyword id="KW-0406">Ion transport</keyword>
<keyword id="KW-0472">Membrane</keyword>
<keyword id="KW-1185">Reference proteome</keyword>
<keyword id="KW-0813">Transport</keyword>
<dbReference type="EMBL" id="AL591983">
    <property type="protein sequence ID" value="CAD00606.1"/>
    <property type="molecule type" value="Genomic_DNA"/>
</dbReference>
<dbReference type="PIR" id="AH1390">
    <property type="entry name" value="AH1390"/>
</dbReference>
<dbReference type="RefSeq" id="NP_466051.1">
    <property type="nucleotide sequence ID" value="NC_003210.1"/>
</dbReference>
<dbReference type="RefSeq" id="WP_003723461.1">
    <property type="nucleotide sequence ID" value="NZ_CP149495.1"/>
</dbReference>
<dbReference type="SMR" id="Q8Y4C2"/>
<dbReference type="STRING" id="169963.gene:17595239"/>
<dbReference type="PaxDb" id="169963-lmo2528"/>
<dbReference type="EnsemblBacteria" id="CAD00606">
    <property type="protein sequence ID" value="CAD00606"/>
    <property type="gene ID" value="CAD00606"/>
</dbReference>
<dbReference type="GeneID" id="987290"/>
<dbReference type="KEGG" id="lmo:lmo2528"/>
<dbReference type="PATRIC" id="fig|169963.11.peg.2589"/>
<dbReference type="eggNOG" id="COG0355">
    <property type="taxonomic scope" value="Bacteria"/>
</dbReference>
<dbReference type="HOGENOM" id="CLU_084338_1_0_9"/>
<dbReference type="OrthoDB" id="9804110at2"/>
<dbReference type="PhylomeDB" id="Q8Y4C2"/>
<dbReference type="BioCyc" id="LMON169963:LMO2528-MONOMER"/>
<dbReference type="Proteomes" id="UP000000817">
    <property type="component" value="Chromosome"/>
</dbReference>
<dbReference type="GO" id="GO:0005886">
    <property type="term" value="C:plasma membrane"/>
    <property type="evidence" value="ECO:0007669"/>
    <property type="project" value="UniProtKB-SubCell"/>
</dbReference>
<dbReference type="GO" id="GO:0045259">
    <property type="term" value="C:proton-transporting ATP synthase complex"/>
    <property type="evidence" value="ECO:0007669"/>
    <property type="project" value="UniProtKB-KW"/>
</dbReference>
<dbReference type="GO" id="GO:0005524">
    <property type="term" value="F:ATP binding"/>
    <property type="evidence" value="ECO:0007669"/>
    <property type="project" value="UniProtKB-UniRule"/>
</dbReference>
<dbReference type="GO" id="GO:0046933">
    <property type="term" value="F:proton-transporting ATP synthase activity, rotational mechanism"/>
    <property type="evidence" value="ECO:0007669"/>
    <property type="project" value="UniProtKB-UniRule"/>
</dbReference>
<dbReference type="GO" id="GO:0015986">
    <property type="term" value="P:proton motive force-driven ATP synthesis"/>
    <property type="evidence" value="ECO:0000318"/>
    <property type="project" value="GO_Central"/>
</dbReference>
<dbReference type="CDD" id="cd12152">
    <property type="entry name" value="F1-ATPase_delta"/>
    <property type="match status" value="1"/>
</dbReference>
<dbReference type="FunFam" id="1.20.5.440:FF:000001">
    <property type="entry name" value="ATP synthase epsilon chain"/>
    <property type="match status" value="1"/>
</dbReference>
<dbReference type="FunFam" id="2.60.15.10:FF:000001">
    <property type="entry name" value="ATP synthase epsilon chain"/>
    <property type="match status" value="1"/>
</dbReference>
<dbReference type="Gene3D" id="1.20.5.440">
    <property type="entry name" value="ATP synthase delta/epsilon subunit, C-terminal domain"/>
    <property type="match status" value="1"/>
</dbReference>
<dbReference type="Gene3D" id="2.60.15.10">
    <property type="entry name" value="F0F1 ATP synthase delta/epsilon subunit, N-terminal"/>
    <property type="match status" value="1"/>
</dbReference>
<dbReference type="HAMAP" id="MF_00530">
    <property type="entry name" value="ATP_synth_epsil_bac"/>
    <property type="match status" value="1"/>
</dbReference>
<dbReference type="InterPro" id="IPR036794">
    <property type="entry name" value="ATP_F1_dsu/esu_C_sf"/>
</dbReference>
<dbReference type="InterPro" id="IPR001469">
    <property type="entry name" value="ATP_synth_F1_dsu/esu"/>
</dbReference>
<dbReference type="InterPro" id="IPR020546">
    <property type="entry name" value="ATP_synth_F1_dsu/esu_N"/>
</dbReference>
<dbReference type="InterPro" id="IPR020547">
    <property type="entry name" value="ATP_synth_F1_esu_C"/>
</dbReference>
<dbReference type="InterPro" id="IPR036771">
    <property type="entry name" value="ATPsynth_dsu/esu_N"/>
</dbReference>
<dbReference type="NCBIfam" id="TIGR01216">
    <property type="entry name" value="ATP_synt_epsi"/>
    <property type="match status" value="1"/>
</dbReference>
<dbReference type="NCBIfam" id="NF001846">
    <property type="entry name" value="PRK00571.1-3"/>
    <property type="match status" value="1"/>
</dbReference>
<dbReference type="NCBIfam" id="NF009977">
    <property type="entry name" value="PRK13442.1"/>
    <property type="match status" value="1"/>
</dbReference>
<dbReference type="PANTHER" id="PTHR13822">
    <property type="entry name" value="ATP SYNTHASE DELTA/EPSILON CHAIN"/>
    <property type="match status" value="1"/>
</dbReference>
<dbReference type="PANTHER" id="PTHR13822:SF10">
    <property type="entry name" value="ATP SYNTHASE EPSILON CHAIN, CHLOROPLASTIC"/>
    <property type="match status" value="1"/>
</dbReference>
<dbReference type="Pfam" id="PF00401">
    <property type="entry name" value="ATP-synt_DE"/>
    <property type="match status" value="1"/>
</dbReference>
<dbReference type="Pfam" id="PF02823">
    <property type="entry name" value="ATP-synt_DE_N"/>
    <property type="match status" value="1"/>
</dbReference>
<dbReference type="SUPFAM" id="SSF46604">
    <property type="entry name" value="Epsilon subunit of F1F0-ATP synthase C-terminal domain"/>
    <property type="match status" value="1"/>
</dbReference>
<dbReference type="SUPFAM" id="SSF51344">
    <property type="entry name" value="Epsilon subunit of F1F0-ATP synthase N-terminal domain"/>
    <property type="match status" value="1"/>
</dbReference>
<feature type="chain" id="PRO_0000188154" description="ATP synthase epsilon chain">
    <location>
        <begin position="1"/>
        <end position="134"/>
    </location>
</feature>